<name>UVRC_YERPE</name>
<sequence>MTDLFDYKEFLKTVTSQPGVYRMYDTAGTVIYVGKAKDLKKRLTSYFRAQVANRKTETLVKNIAQIDVTVTHTETEALLLEHNYIKLYQPRYNVLLRDDKSYPLIFLSADEHPRLAVHRGAKHEKGEYFGPFPNSYAVRETLALLQKLFPVRQCENSVYRNRSRPCLQYQIGRCSGPCVEGLVSEEEYQRQVDYVRLFLSGKDQQVLTQLITRMEEASQQLHFEDAARIRDQIQAVRRVTEQQFVSGDSEDLDVIGVAFDAGLACVHVLFIRLGKVLGSRSYFPKVPAGTELSEVVQTFVGQFYLQGSQGRTLPGEILLDFTLTEKDLLASSLSELAGRKIQIQSRPRGDRARYLKLARTNASTALITRLSQQSTIHQRMKELAKVLKLDEINRMECFDISHTMGEQTVASCVVFDANGPVRSEYRRYNISGITPGDDYAAMAQVLKRRYGKALDDQKIPDVIFIDGGKGQLSQAFDVFASLNVPWDKQKPLLVGVAKGSDRKAGLETLFLASEGEGFSLPPDSPALHLIQHIRDDSHNHAITGHRQRRSKVKNTSALEMIEGVGPKRRQVLLKYMGGLQPLFNASVEEIAKVPGISQALAEKIHNALKH</sequence>
<organism>
    <name type="scientific">Yersinia pestis</name>
    <dbReference type="NCBI Taxonomy" id="632"/>
    <lineage>
        <taxon>Bacteria</taxon>
        <taxon>Pseudomonadati</taxon>
        <taxon>Pseudomonadota</taxon>
        <taxon>Gammaproteobacteria</taxon>
        <taxon>Enterobacterales</taxon>
        <taxon>Yersiniaceae</taxon>
        <taxon>Yersinia</taxon>
    </lineage>
</organism>
<reference key="1">
    <citation type="journal article" date="2001" name="Nature">
        <title>Genome sequence of Yersinia pestis, the causative agent of plague.</title>
        <authorList>
            <person name="Parkhill J."/>
            <person name="Wren B.W."/>
            <person name="Thomson N.R."/>
            <person name="Titball R.W."/>
            <person name="Holden M.T.G."/>
            <person name="Prentice M.B."/>
            <person name="Sebaihia M."/>
            <person name="James K.D."/>
            <person name="Churcher C.M."/>
            <person name="Mungall K.L."/>
            <person name="Baker S."/>
            <person name="Basham D."/>
            <person name="Bentley S.D."/>
            <person name="Brooks K."/>
            <person name="Cerdeno-Tarraga A.-M."/>
            <person name="Chillingworth T."/>
            <person name="Cronin A."/>
            <person name="Davies R.M."/>
            <person name="Davis P."/>
            <person name="Dougan G."/>
            <person name="Feltwell T."/>
            <person name="Hamlin N."/>
            <person name="Holroyd S."/>
            <person name="Jagels K."/>
            <person name="Karlyshev A.V."/>
            <person name="Leather S."/>
            <person name="Moule S."/>
            <person name="Oyston P.C.F."/>
            <person name="Quail M.A."/>
            <person name="Rutherford K.M."/>
            <person name="Simmonds M."/>
            <person name="Skelton J."/>
            <person name="Stevens K."/>
            <person name="Whitehead S."/>
            <person name="Barrell B.G."/>
        </authorList>
    </citation>
    <scope>NUCLEOTIDE SEQUENCE [LARGE SCALE GENOMIC DNA]</scope>
    <source>
        <strain>CO-92 / Biovar Orientalis</strain>
    </source>
</reference>
<reference key="2">
    <citation type="journal article" date="2002" name="J. Bacteriol.">
        <title>Genome sequence of Yersinia pestis KIM.</title>
        <authorList>
            <person name="Deng W."/>
            <person name="Burland V."/>
            <person name="Plunkett G. III"/>
            <person name="Boutin A."/>
            <person name="Mayhew G.F."/>
            <person name="Liss P."/>
            <person name="Perna N.T."/>
            <person name="Rose D.J."/>
            <person name="Mau B."/>
            <person name="Zhou S."/>
            <person name="Schwartz D.C."/>
            <person name="Fetherston J.D."/>
            <person name="Lindler L.E."/>
            <person name="Brubaker R.R."/>
            <person name="Plano G.V."/>
            <person name="Straley S.C."/>
            <person name="McDonough K.A."/>
            <person name="Nilles M.L."/>
            <person name="Matson J.S."/>
            <person name="Blattner F.R."/>
            <person name="Perry R.D."/>
        </authorList>
    </citation>
    <scope>NUCLEOTIDE SEQUENCE [LARGE SCALE GENOMIC DNA]</scope>
    <source>
        <strain>KIM10+ / Biovar Mediaevalis</strain>
    </source>
</reference>
<reference key="3">
    <citation type="journal article" date="2004" name="DNA Res.">
        <title>Complete genome sequence of Yersinia pestis strain 91001, an isolate avirulent to humans.</title>
        <authorList>
            <person name="Song Y."/>
            <person name="Tong Z."/>
            <person name="Wang J."/>
            <person name="Wang L."/>
            <person name="Guo Z."/>
            <person name="Han Y."/>
            <person name="Zhang J."/>
            <person name="Pei D."/>
            <person name="Zhou D."/>
            <person name="Qin H."/>
            <person name="Pang X."/>
            <person name="Han Y."/>
            <person name="Zhai J."/>
            <person name="Li M."/>
            <person name="Cui B."/>
            <person name="Qi Z."/>
            <person name="Jin L."/>
            <person name="Dai R."/>
            <person name="Chen F."/>
            <person name="Li S."/>
            <person name="Ye C."/>
            <person name="Du Z."/>
            <person name="Lin W."/>
            <person name="Wang J."/>
            <person name="Yu J."/>
            <person name="Yang H."/>
            <person name="Wang J."/>
            <person name="Huang P."/>
            <person name="Yang R."/>
        </authorList>
    </citation>
    <scope>NUCLEOTIDE SEQUENCE [LARGE SCALE GENOMIC DNA]</scope>
    <source>
        <strain>91001 / Biovar Mediaevalis</strain>
    </source>
</reference>
<dbReference type="EMBL" id="AL590842">
    <property type="protein sequence ID" value="CAL20506.1"/>
    <property type="molecule type" value="Genomic_DNA"/>
</dbReference>
<dbReference type="EMBL" id="AE009952">
    <property type="protein sequence ID" value="AAM85999.1"/>
    <property type="status" value="ALT_INIT"/>
    <property type="molecule type" value="Genomic_DNA"/>
</dbReference>
<dbReference type="EMBL" id="AE017042">
    <property type="protein sequence ID" value="AAS61762.1"/>
    <property type="status" value="ALT_INIT"/>
    <property type="molecule type" value="Genomic_DNA"/>
</dbReference>
<dbReference type="PIR" id="AG0227">
    <property type="entry name" value="AG0227"/>
</dbReference>
<dbReference type="RefSeq" id="WP_002220477.1">
    <property type="nucleotide sequence ID" value="NZ_WUCM01000005.1"/>
</dbReference>
<dbReference type="SMR" id="Q8ZF52"/>
<dbReference type="IntAct" id="Q8ZF52">
    <property type="interactions" value="4"/>
</dbReference>
<dbReference type="STRING" id="214092.YPO1866"/>
<dbReference type="PaxDb" id="214092-YPO1866"/>
<dbReference type="DNASU" id="1147389"/>
<dbReference type="EnsemblBacteria" id="AAS61762">
    <property type="protein sequence ID" value="AAS61762"/>
    <property type="gene ID" value="YP_1527"/>
</dbReference>
<dbReference type="GeneID" id="57976715"/>
<dbReference type="KEGG" id="ype:YPO1866"/>
<dbReference type="KEGG" id="ypj:CH55_809"/>
<dbReference type="KEGG" id="ypk:y2442"/>
<dbReference type="KEGG" id="ypl:CH46_3257"/>
<dbReference type="KEGG" id="ypm:YP_1527"/>
<dbReference type="KEGG" id="ypv:BZ15_1684"/>
<dbReference type="KEGG" id="ypw:CH59_3300"/>
<dbReference type="PATRIC" id="fig|632.151.peg.2804"/>
<dbReference type="eggNOG" id="COG0322">
    <property type="taxonomic scope" value="Bacteria"/>
</dbReference>
<dbReference type="HOGENOM" id="CLU_014841_3_2_6"/>
<dbReference type="OMA" id="HIECFDN"/>
<dbReference type="Proteomes" id="UP000000815">
    <property type="component" value="Chromosome"/>
</dbReference>
<dbReference type="Proteomes" id="UP000001019">
    <property type="component" value="Chromosome"/>
</dbReference>
<dbReference type="Proteomes" id="UP000002490">
    <property type="component" value="Chromosome"/>
</dbReference>
<dbReference type="GO" id="GO:0005737">
    <property type="term" value="C:cytoplasm"/>
    <property type="evidence" value="ECO:0007669"/>
    <property type="project" value="UniProtKB-SubCell"/>
</dbReference>
<dbReference type="GO" id="GO:0009380">
    <property type="term" value="C:excinuclease repair complex"/>
    <property type="evidence" value="ECO:0000318"/>
    <property type="project" value="GO_Central"/>
</dbReference>
<dbReference type="GO" id="GO:0003677">
    <property type="term" value="F:DNA binding"/>
    <property type="evidence" value="ECO:0007669"/>
    <property type="project" value="UniProtKB-UniRule"/>
</dbReference>
<dbReference type="GO" id="GO:0009381">
    <property type="term" value="F:excinuclease ABC activity"/>
    <property type="evidence" value="ECO:0007669"/>
    <property type="project" value="UniProtKB-UniRule"/>
</dbReference>
<dbReference type="GO" id="GO:0006974">
    <property type="term" value="P:DNA damage response"/>
    <property type="evidence" value="ECO:0000318"/>
    <property type="project" value="GO_Central"/>
</dbReference>
<dbReference type="GO" id="GO:0006289">
    <property type="term" value="P:nucleotide-excision repair"/>
    <property type="evidence" value="ECO:0007669"/>
    <property type="project" value="UniProtKB-UniRule"/>
</dbReference>
<dbReference type="GO" id="GO:0009432">
    <property type="term" value="P:SOS response"/>
    <property type="evidence" value="ECO:0007669"/>
    <property type="project" value="UniProtKB-UniRule"/>
</dbReference>
<dbReference type="CDD" id="cd10434">
    <property type="entry name" value="GIY-YIG_UvrC_Cho"/>
    <property type="match status" value="1"/>
</dbReference>
<dbReference type="FunFam" id="1.10.150.20:FF:000005">
    <property type="entry name" value="UvrABC system protein C"/>
    <property type="match status" value="1"/>
</dbReference>
<dbReference type="FunFam" id="3.30.420.340:FF:000001">
    <property type="entry name" value="UvrABC system protein C"/>
    <property type="match status" value="1"/>
</dbReference>
<dbReference type="FunFam" id="3.40.1440.10:FF:000001">
    <property type="entry name" value="UvrABC system protein C"/>
    <property type="match status" value="1"/>
</dbReference>
<dbReference type="FunFam" id="4.10.860.10:FF:000002">
    <property type="entry name" value="UvrABC system protein C"/>
    <property type="match status" value="1"/>
</dbReference>
<dbReference type="Gene3D" id="1.10.150.20">
    <property type="entry name" value="5' to 3' exonuclease, C-terminal subdomain"/>
    <property type="match status" value="1"/>
</dbReference>
<dbReference type="Gene3D" id="3.40.1440.10">
    <property type="entry name" value="GIY-YIG endonuclease"/>
    <property type="match status" value="1"/>
</dbReference>
<dbReference type="Gene3D" id="4.10.860.10">
    <property type="entry name" value="UVR domain"/>
    <property type="match status" value="1"/>
</dbReference>
<dbReference type="Gene3D" id="3.30.420.340">
    <property type="entry name" value="UvrC, RNAse H endonuclease domain"/>
    <property type="match status" value="1"/>
</dbReference>
<dbReference type="HAMAP" id="MF_00203">
    <property type="entry name" value="UvrC"/>
    <property type="match status" value="1"/>
</dbReference>
<dbReference type="InterPro" id="IPR000305">
    <property type="entry name" value="GIY-YIG_endonuc"/>
</dbReference>
<dbReference type="InterPro" id="IPR035901">
    <property type="entry name" value="GIY-YIG_endonuc_sf"/>
</dbReference>
<dbReference type="InterPro" id="IPR047296">
    <property type="entry name" value="GIY-YIG_UvrC_Cho"/>
</dbReference>
<dbReference type="InterPro" id="IPR003583">
    <property type="entry name" value="Hlx-hairpin-Hlx_DNA-bd_motif"/>
</dbReference>
<dbReference type="InterPro" id="IPR010994">
    <property type="entry name" value="RuvA_2-like"/>
</dbReference>
<dbReference type="InterPro" id="IPR001943">
    <property type="entry name" value="UVR_dom"/>
</dbReference>
<dbReference type="InterPro" id="IPR036876">
    <property type="entry name" value="UVR_dom_sf"/>
</dbReference>
<dbReference type="InterPro" id="IPR050066">
    <property type="entry name" value="UvrABC_protein_C"/>
</dbReference>
<dbReference type="InterPro" id="IPR004791">
    <property type="entry name" value="UvrC"/>
</dbReference>
<dbReference type="InterPro" id="IPR001162">
    <property type="entry name" value="UvrC_RNase_H_dom"/>
</dbReference>
<dbReference type="InterPro" id="IPR038476">
    <property type="entry name" value="UvrC_RNase_H_dom_sf"/>
</dbReference>
<dbReference type="NCBIfam" id="NF001824">
    <property type="entry name" value="PRK00558.1-5"/>
    <property type="match status" value="1"/>
</dbReference>
<dbReference type="NCBIfam" id="TIGR00194">
    <property type="entry name" value="uvrC"/>
    <property type="match status" value="1"/>
</dbReference>
<dbReference type="PANTHER" id="PTHR30562:SF1">
    <property type="entry name" value="UVRABC SYSTEM PROTEIN C"/>
    <property type="match status" value="1"/>
</dbReference>
<dbReference type="PANTHER" id="PTHR30562">
    <property type="entry name" value="UVRC/OXIDOREDUCTASE"/>
    <property type="match status" value="1"/>
</dbReference>
<dbReference type="Pfam" id="PF01541">
    <property type="entry name" value="GIY-YIG"/>
    <property type="match status" value="1"/>
</dbReference>
<dbReference type="Pfam" id="PF14520">
    <property type="entry name" value="HHH_5"/>
    <property type="match status" value="1"/>
</dbReference>
<dbReference type="Pfam" id="PF02151">
    <property type="entry name" value="UVR"/>
    <property type="match status" value="1"/>
</dbReference>
<dbReference type="Pfam" id="PF22920">
    <property type="entry name" value="UvrC_RNaseH"/>
    <property type="match status" value="1"/>
</dbReference>
<dbReference type="Pfam" id="PF08459">
    <property type="entry name" value="UvrC_RNaseH_dom"/>
    <property type="match status" value="1"/>
</dbReference>
<dbReference type="SMART" id="SM00465">
    <property type="entry name" value="GIYc"/>
    <property type="match status" value="1"/>
</dbReference>
<dbReference type="SMART" id="SM00278">
    <property type="entry name" value="HhH1"/>
    <property type="match status" value="2"/>
</dbReference>
<dbReference type="SUPFAM" id="SSF46600">
    <property type="entry name" value="C-terminal UvrC-binding domain of UvrB"/>
    <property type="match status" value="1"/>
</dbReference>
<dbReference type="SUPFAM" id="SSF82771">
    <property type="entry name" value="GIY-YIG endonuclease"/>
    <property type="match status" value="1"/>
</dbReference>
<dbReference type="SUPFAM" id="SSF47781">
    <property type="entry name" value="RuvA domain 2-like"/>
    <property type="match status" value="1"/>
</dbReference>
<dbReference type="PROSITE" id="PS50164">
    <property type="entry name" value="GIY_YIG"/>
    <property type="match status" value="1"/>
</dbReference>
<dbReference type="PROSITE" id="PS50151">
    <property type="entry name" value="UVR"/>
    <property type="match status" value="1"/>
</dbReference>
<dbReference type="PROSITE" id="PS50165">
    <property type="entry name" value="UVRC"/>
    <property type="match status" value="1"/>
</dbReference>
<protein>
    <recommendedName>
        <fullName evidence="1">UvrABC system protein C</fullName>
        <shortName evidence="1">Protein UvrC</shortName>
    </recommendedName>
    <alternativeName>
        <fullName evidence="1">Excinuclease ABC subunit C</fullName>
    </alternativeName>
</protein>
<feature type="chain" id="PRO_0000138364" description="UvrABC system protein C">
    <location>
        <begin position="1"/>
        <end position="610"/>
    </location>
</feature>
<feature type="domain" description="GIY-YIG" evidence="1">
    <location>
        <begin position="16"/>
        <end position="94"/>
    </location>
</feature>
<feature type="domain" description="UVR" evidence="1">
    <location>
        <begin position="204"/>
        <end position="239"/>
    </location>
</feature>
<comment type="function">
    <text evidence="1">The UvrABC repair system catalyzes the recognition and processing of DNA lesions. UvrC both incises the 5' and 3' sides of the lesion. The N-terminal half is responsible for the 3' incision and the C-terminal half is responsible for the 5' incision.</text>
</comment>
<comment type="subunit">
    <text evidence="1">Interacts with UvrB in an incision complex.</text>
</comment>
<comment type="subcellular location">
    <subcellularLocation>
        <location evidence="1">Cytoplasm</location>
    </subcellularLocation>
</comment>
<comment type="similarity">
    <text evidence="1">Belongs to the UvrC family.</text>
</comment>
<comment type="sequence caution" evidence="2">
    <conflict type="erroneous initiation">
        <sequence resource="EMBL-CDS" id="AAM85999"/>
    </conflict>
</comment>
<comment type="sequence caution" evidence="2">
    <conflict type="erroneous initiation">
        <sequence resource="EMBL-CDS" id="AAS61762"/>
    </conflict>
</comment>
<keyword id="KW-0963">Cytoplasm</keyword>
<keyword id="KW-0227">DNA damage</keyword>
<keyword id="KW-0228">DNA excision</keyword>
<keyword id="KW-0234">DNA repair</keyword>
<keyword id="KW-0267">Excision nuclease</keyword>
<keyword id="KW-1185">Reference proteome</keyword>
<keyword id="KW-0742">SOS response</keyword>
<gene>
    <name evidence="1" type="primary">uvrC</name>
    <name type="ordered locus">YPO1866</name>
    <name type="ordered locus">y2442</name>
    <name type="ordered locus">YP_1527</name>
</gene>
<accession>Q8ZF52</accession>
<accession>Q0WFS8</accession>
<evidence type="ECO:0000255" key="1">
    <source>
        <dbReference type="HAMAP-Rule" id="MF_00203"/>
    </source>
</evidence>
<evidence type="ECO:0000305" key="2"/>
<proteinExistence type="inferred from homology"/>